<evidence type="ECO:0000255" key="1">
    <source>
        <dbReference type="HAMAP-Rule" id="MF_02005"/>
    </source>
</evidence>
<evidence type="ECO:0000256" key="2">
    <source>
        <dbReference type="SAM" id="MobiDB-lite"/>
    </source>
</evidence>
<sequence length="911" mass="102143">MTEGKSIINANLTPLPDKVGVDGLEDKWRAVWDEDGTYKFRNTRDRKAVYSIDTPPPTVSGSLHVGHVFSYTHTDVIARYKRMRGYDVFYPMGWDDNGLPTERRVQNYYGVRVDVSLPYDPDFKPPFEGTDGKKIDAKDQVPISRKNFIELCERLTAQDEKLFEALWRKLGLSIDWSQTYHTIGQHPQRVAQKAFLRNLARGEAYQQDAPGLWDVTFQTAVAQAELESREYPGFYHKVAFRFEDGTPIYIETTRPELLAACTSLIANPNDERYKQYFGQYVYSPLFKVKVPILAHPAAEMDKGAGIAMCCTFGDVTDVEWWRDLKLPTRPIIQRNGRIVMDTPDWIEDPAGREVFAETAGKTTFSARKIIVDKLRESGDLDGEPTPTKRMTNFYEKGDKPLEIVTSRQWYLKNGGTDAKLNAELIERGKELEFHPDFMRVRYENWVHGLNGDWLISRQRFFGVPFPLWYPVNASGEPDYDHPITPSEDRLPIDPTIDVPEGYDESQRDVPGGFTAEKDIMDTWATSSLTPQIVTHWAEPDEASKALFASTFPMDLRPQGQDIIRTWLFSTVDRAHLENKCLPWAHATLSGWILDPDHKKMSKSKGNVVVPNEPIEKFGADAVRYWAAAARLGLDATYDIGQMKIGRRLAIKLLNATKFALAIGREDENHHVGAAAEAAWNPADVTEPLDRAAMAKLALVVRQATEALESYEHSKALEVIESYFWQFCDDYIELVKNRAYGTPDEHGNVPSEKAVKSARTALGLGLDAFARLLAPYLPYATEEVWSWMHAGSGSVHRTAWPVVDPYVEAATGASPELLTWAGKAVEQLRKIKSEAKVSMKTPILSVALSAASEGVEAIHAALGDIAQAGRVVGKFDLVAKHAEESAAEDAPETEVAVEASELGEPPAKKPKH</sequence>
<reference key="1">
    <citation type="journal article" date="2008" name="BMC Genomics">
        <title>Comparative genomic analysis of the gut bacterium Bifidobacterium longum reveals loci susceptible to deletion during pure culture growth.</title>
        <authorList>
            <person name="Lee J.H."/>
            <person name="Karamychev V.N."/>
            <person name="Kozyavkin S.A."/>
            <person name="Mills D."/>
            <person name="Pavlov A.R."/>
            <person name="Pavlova N.V."/>
            <person name="Polouchine N.N."/>
            <person name="Richardson P.M."/>
            <person name="Shakhova V.V."/>
            <person name="Slesarev A.I."/>
            <person name="Weimer B."/>
            <person name="O'Sullivan D.J."/>
        </authorList>
    </citation>
    <scope>NUCLEOTIDE SEQUENCE [LARGE SCALE GENOMIC DNA]</scope>
    <source>
        <strain>DJO10A</strain>
    </source>
</reference>
<feature type="chain" id="PRO_1000189251" description="Valine--tRNA ligase">
    <location>
        <begin position="1"/>
        <end position="911"/>
    </location>
</feature>
<feature type="region of interest" description="Disordered" evidence="2">
    <location>
        <begin position="882"/>
        <end position="911"/>
    </location>
</feature>
<feature type="short sequence motif" description="'HIGH' region">
    <location>
        <begin position="57"/>
        <end position="67"/>
    </location>
</feature>
<feature type="short sequence motif" description="'KMSKS' region">
    <location>
        <begin position="599"/>
        <end position="603"/>
    </location>
</feature>
<feature type="binding site" evidence="1">
    <location>
        <position position="602"/>
    </location>
    <ligand>
        <name>ATP</name>
        <dbReference type="ChEBI" id="CHEBI:30616"/>
    </ligand>
</feature>
<dbReference type="EC" id="6.1.1.9" evidence="1"/>
<dbReference type="EMBL" id="CP000605">
    <property type="protein sequence ID" value="ACD98642.1"/>
    <property type="molecule type" value="Genomic_DNA"/>
</dbReference>
<dbReference type="RefSeq" id="WP_010081039.1">
    <property type="nucleotide sequence ID" value="NC_010816.1"/>
</dbReference>
<dbReference type="SMR" id="B3DU23"/>
<dbReference type="KEGG" id="blj:BLD_1197"/>
<dbReference type="HOGENOM" id="CLU_001493_0_2_11"/>
<dbReference type="Proteomes" id="UP000002419">
    <property type="component" value="Chromosome"/>
</dbReference>
<dbReference type="GO" id="GO:0005829">
    <property type="term" value="C:cytosol"/>
    <property type="evidence" value="ECO:0007669"/>
    <property type="project" value="TreeGrafter"/>
</dbReference>
<dbReference type="GO" id="GO:0002161">
    <property type="term" value="F:aminoacyl-tRNA deacylase activity"/>
    <property type="evidence" value="ECO:0007669"/>
    <property type="project" value="InterPro"/>
</dbReference>
<dbReference type="GO" id="GO:0005524">
    <property type="term" value="F:ATP binding"/>
    <property type="evidence" value="ECO:0007669"/>
    <property type="project" value="UniProtKB-UniRule"/>
</dbReference>
<dbReference type="GO" id="GO:0004832">
    <property type="term" value="F:valine-tRNA ligase activity"/>
    <property type="evidence" value="ECO:0007669"/>
    <property type="project" value="UniProtKB-UniRule"/>
</dbReference>
<dbReference type="GO" id="GO:0006438">
    <property type="term" value="P:valyl-tRNA aminoacylation"/>
    <property type="evidence" value="ECO:0007669"/>
    <property type="project" value="UniProtKB-UniRule"/>
</dbReference>
<dbReference type="CDD" id="cd07962">
    <property type="entry name" value="Anticodon_Ia_Val"/>
    <property type="match status" value="1"/>
</dbReference>
<dbReference type="Gene3D" id="3.40.50.620">
    <property type="entry name" value="HUPs"/>
    <property type="match status" value="2"/>
</dbReference>
<dbReference type="Gene3D" id="1.10.730.10">
    <property type="entry name" value="Isoleucyl-tRNA Synthetase, Domain 1"/>
    <property type="match status" value="1"/>
</dbReference>
<dbReference type="Gene3D" id="3.90.740.10">
    <property type="entry name" value="Valyl/Leucyl/Isoleucyl-tRNA synthetase, editing domain"/>
    <property type="match status" value="1"/>
</dbReference>
<dbReference type="HAMAP" id="MF_02005">
    <property type="entry name" value="Val_tRNA_synth_type2"/>
    <property type="match status" value="1"/>
</dbReference>
<dbReference type="InterPro" id="IPR001412">
    <property type="entry name" value="aa-tRNA-synth_I_CS"/>
</dbReference>
<dbReference type="InterPro" id="IPR002300">
    <property type="entry name" value="aa-tRNA-synth_Ia"/>
</dbReference>
<dbReference type="InterPro" id="IPR033705">
    <property type="entry name" value="Anticodon_Ia_Val"/>
</dbReference>
<dbReference type="InterPro" id="IPR013155">
    <property type="entry name" value="M/V/L/I-tRNA-synth_anticd-bd"/>
</dbReference>
<dbReference type="InterPro" id="IPR014729">
    <property type="entry name" value="Rossmann-like_a/b/a_fold"/>
</dbReference>
<dbReference type="InterPro" id="IPR009080">
    <property type="entry name" value="tRNAsynth_Ia_anticodon-bd"/>
</dbReference>
<dbReference type="InterPro" id="IPR009008">
    <property type="entry name" value="Val/Leu/Ile-tRNA-synth_edit"/>
</dbReference>
<dbReference type="InterPro" id="IPR022874">
    <property type="entry name" value="Valine-tRNA_ligase_type_2"/>
</dbReference>
<dbReference type="InterPro" id="IPR002303">
    <property type="entry name" value="Valyl-tRNA_ligase"/>
</dbReference>
<dbReference type="InterPro" id="IPR048044">
    <property type="entry name" value="Valyl-tRNA_ligase_actino"/>
</dbReference>
<dbReference type="NCBIfam" id="NF000540">
    <property type="entry name" value="alt_ValS"/>
    <property type="match status" value="1"/>
</dbReference>
<dbReference type="NCBIfam" id="NF009687">
    <property type="entry name" value="PRK13208.1"/>
    <property type="match status" value="1"/>
</dbReference>
<dbReference type="PANTHER" id="PTHR11946:SF93">
    <property type="entry name" value="VALINE--TRNA LIGASE, CHLOROPLASTIC_MITOCHONDRIAL 2"/>
    <property type="match status" value="1"/>
</dbReference>
<dbReference type="PANTHER" id="PTHR11946">
    <property type="entry name" value="VALYL-TRNA SYNTHETASES"/>
    <property type="match status" value="1"/>
</dbReference>
<dbReference type="Pfam" id="PF08264">
    <property type="entry name" value="Anticodon_1"/>
    <property type="match status" value="1"/>
</dbReference>
<dbReference type="Pfam" id="PF00133">
    <property type="entry name" value="tRNA-synt_1"/>
    <property type="match status" value="2"/>
</dbReference>
<dbReference type="PRINTS" id="PR00986">
    <property type="entry name" value="TRNASYNTHVAL"/>
</dbReference>
<dbReference type="SUPFAM" id="SSF47323">
    <property type="entry name" value="Anticodon-binding domain of a subclass of class I aminoacyl-tRNA synthetases"/>
    <property type="match status" value="1"/>
</dbReference>
<dbReference type="SUPFAM" id="SSF52374">
    <property type="entry name" value="Nucleotidylyl transferase"/>
    <property type="match status" value="1"/>
</dbReference>
<dbReference type="SUPFAM" id="SSF50677">
    <property type="entry name" value="ValRS/IleRS/LeuRS editing domain"/>
    <property type="match status" value="1"/>
</dbReference>
<dbReference type="PROSITE" id="PS00178">
    <property type="entry name" value="AA_TRNA_LIGASE_I"/>
    <property type="match status" value="1"/>
</dbReference>
<comment type="function">
    <text evidence="1">Catalyzes the attachment of valine to tRNA(Val). As ValRS can inadvertently accommodate and process structurally similar amino acids such as threonine, to avoid such errors, it has a 'posttransfer' editing activity that hydrolyzes mischarged Thr-tRNA(Val) in a tRNA-dependent manner.</text>
</comment>
<comment type="catalytic activity">
    <reaction evidence="1">
        <text>tRNA(Val) + L-valine + ATP = L-valyl-tRNA(Val) + AMP + diphosphate</text>
        <dbReference type="Rhea" id="RHEA:10704"/>
        <dbReference type="Rhea" id="RHEA-COMP:9672"/>
        <dbReference type="Rhea" id="RHEA-COMP:9708"/>
        <dbReference type="ChEBI" id="CHEBI:30616"/>
        <dbReference type="ChEBI" id="CHEBI:33019"/>
        <dbReference type="ChEBI" id="CHEBI:57762"/>
        <dbReference type="ChEBI" id="CHEBI:78442"/>
        <dbReference type="ChEBI" id="CHEBI:78537"/>
        <dbReference type="ChEBI" id="CHEBI:456215"/>
        <dbReference type="EC" id="6.1.1.9"/>
    </reaction>
</comment>
<comment type="subunit">
    <text evidence="1">Monomer.</text>
</comment>
<comment type="subcellular location">
    <subcellularLocation>
        <location evidence="1">Cytoplasm</location>
    </subcellularLocation>
</comment>
<comment type="domain">
    <text evidence="1">ValRS has two distinct active sites: one for aminoacylation and one for editing. The misactivated threonine is translocated from the active site to the editing site.</text>
</comment>
<comment type="similarity">
    <text evidence="1">Belongs to the class-I aminoacyl-tRNA synthetase family. ValS type 2 subfamily.</text>
</comment>
<name>SYV_BIFLD</name>
<proteinExistence type="inferred from homology"/>
<accession>B3DU23</accession>
<gene>
    <name evidence="1" type="primary">valS</name>
    <name type="ordered locus">BLD_1197</name>
</gene>
<protein>
    <recommendedName>
        <fullName evidence="1">Valine--tRNA ligase</fullName>
        <ecNumber evidence="1">6.1.1.9</ecNumber>
    </recommendedName>
    <alternativeName>
        <fullName evidence="1">Valyl-tRNA synthetase</fullName>
        <shortName evidence="1">ValRS</shortName>
    </alternativeName>
</protein>
<keyword id="KW-0030">Aminoacyl-tRNA synthetase</keyword>
<keyword id="KW-0067">ATP-binding</keyword>
<keyword id="KW-0963">Cytoplasm</keyword>
<keyword id="KW-0436">Ligase</keyword>
<keyword id="KW-0547">Nucleotide-binding</keyword>
<keyword id="KW-0648">Protein biosynthesis</keyword>
<organism>
    <name type="scientific">Bifidobacterium longum (strain DJO10A)</name>
    <dbReference type="NCBI Taxonomy" id="205913"/>
    <lineage>
        <taxon>Bacteria</taxon>
        <taxon>Bacillati</taxon>
        <taxon>Actinomycetota</taxon>
        <taxon>Actinomycetes</taxon>
        <taxon>Bifidobacteriales</taxon>
        <taxon>Bifidobacteriaceae</taxon>
        <taxon>Bifidobacterium</taxon>
    </lineage>
</organism>